<dbReference type="EC" id="3.1.3.16" evidence="2"/>
<dbReference type="EMBL" id="Y00701">
    <property type="protein sequence ID" value="CAA68693.1"/>
    <property type="molecule type" value="mRNA"/>
</dbReference>
<dbReference type="EMBL" id="X07798">
    <property type="protein sequence ID" value="CAA30645.1"/>
    <property type="molecule type" value="mRNA"/>
</dbReference>
<dbReference type="EMBL" id="X14832">
    <property type="protein sequence ID" value="CAA32941.1"/>
    <property type="molecule type" value="mRNA"/>
</dbReference>
<dbReference type="PIR" id="S04335">
    <property type="entry name" value="PARB11"/>
</dbReference>
<dbReference type="RefSeq" id="NP_001095176.1">
    <property type="nucleotide sequence ID" value="NM_001101706.1"/>
</dbReference>
<dbReference type="PDB" id="1FJM">
    <property type="method" value="X-ray"/>
    <property type="resolution" value="2.10 A"/>
    <property type="chains" value="A/B=1-330"/>
</dbReference>
<dbReference type="PDB" id="7NZM">
    <property type="method" value="EM"/>
    <property type="resolution" value="3.96 A"/>
    <property type="chains" value="B=7-300"/>
</dbReference>
<dbReference type="PDBsum" id="1FJM"/>
<dbReference type="PDBsum" id="7NZM"/>
<dbReference type="EMDB" id="EMD-12665"/>
<dbReference type="SMR" id="P62139"/>
<dbReference type="BioGRID" id="1172319">
    <property type="interactions" value="81"/>
</dbReference>
<dbReference type="ELM" id="P62139"/>
<dbReference type="FunCoup" id="P62139">
    <property type="interactions" value="1587"/>
</dbReference>
<dbReference type="IntAct" id="P62139">
    <property type="interactions" value="5"/>
</dbReference>
<dbReference type="MINT" id="P62139"/>
<dbReference type="STRING" id="9986.ENSOCUP00000008007"/>
<dbReference type="ChEMBL" id="CHEMBL5458"/>
<dbReference type="iPTMnet" id="P62139"/>
<dbReference type="PaxDb" id="9986-ENSOCUP00000008007"/>
<dbReference type="GeneID" id="100009298"/>
<dbReference type="KEGG" id="ocu:100009298"/>
<dbReference type="CTD" id="5499"/>
<dbReference type="eggNOG" id="KOG0374">
    <property type="taxonomic scope" value="Eukaryota"/>
</dbReference>
<dbReference type="InParanoid" id="P62139"/>
<dbReference type="OrthoDB" id="1930084at2759"/>
<dbReference type="EvolutionaryTrace" id="P62139"/>
<dbReference type="Proteomes" id="UP000001811">
    <property type="component" value="Unplaced"/>
</dbReference>
<dbReference type="GO" id="GO:0005730">
    <property type="term" value="C:nucleolus"/>
    <property type="evidence" value="ECO:0007669"/>
    <property type="project" value="UniProtKB-SubCell"/>
</dbReference>
<dbReference type="GO" id="GO:0005654">
    <property type="term" value="C:nucleoplasm"/>
    <property type="evidence" value="ECO:0007669"/>
    <property type="project" value="UniProtKB-SubCell"/>
</dbReference>
<dbReference type="GO" id="GO:0000164">
    <property type="term" value="C:protein phosphatase type 1 complex"/>
    <property type="evidence" value="ECO:0000314"/>
    <property type="project" value="CAFA"/>
</dbReference>
<dbReference type="GO" id="GO:0072357">
    <property type="term" value="C:PTW/PP1 phosphatase complex"/>
    <property type="evidence" value="ECO:0000250"/>
    <property type="project" value="UniProtKB"/>
</dbReference>
<dbReference type="GO" id="GO:1901567">
    <property type="term" value="F:fatty acid derivative binding"/>
    <property type="evidence" value="ECO:0000314"/>
    <property type="project" value="CAFA"/>
</dbReference>
<dbReference type="GO" id="GO:0005506">
    <property type="term" value="F:iron ion binding"/>
    <property type="evidence" value="ECO:0000250"/>
    <property type="project" value="UniProtKB"/>
</dbReference>
<dbReference type="GO" id="GO:0016791">
    <property type="term" value="F:phosphatase activity"/>
    <property type="evidence" value="ECO:0000250"/>
    <property type="project" value="UniProtKB"/>
</dbReference>
<dbReference type="GO" id="GO:0004721">
    <property type="term" value="F:phosphoprotein phosphatase activity"/>
    <property type="evidence" value="ECO:0000314"/>
    <property type="project" value="ParkinsonsUK-UCL"/>
</dbReference>
<dbReference type="GO" id="GO:0072542">
    <property type="term" value="F:protein phosphatase activator activity"/>
    <property type="evidence" value="ECO:0000314"/>
    <property type="project" value="CAFA"/>
</dbReference>
<dbReference type="GO" id="GO:0004722">
    <property type="term" value="F:protein serine/threonine phosphatase activity"/>
    <property type="evidence" value="ECO:0000314"/>
    <property type="project" value="ParkinsonsUK-UCL"/>
</dbReference>
<dbReference type="GO" id="GO:0180007">
    <property type="term" value="F:RNA polymerase II CTD heptapeptide repeat S5 phosphatase activity"/>
    <property type="evidence" value="ECO:0000250"/>
    <property type="project" value="UniProtKB"/>
</dbReference>
<dbReference type="GO" id="GO:0046914">
    <property type="term" value="F:transition metal ion binding"/>
    <property type="evidence" value="ECO:0000250"/>
    <property type="project" value="UniProtKB"/>
</dbReference>
<dbReference type="GO" id="GO:0051301">
    <property type="term" value="P:cell division"/>
    <property type="evidence" value="ECO:0007669"/>
    <property type="project" value="UniProtKB-KW"/>
</dbReference>
<dbReference type="GO" id="GO:0032922">
    <property type="term" value="P:circadian regulation of gene expression"/>
    <property type="evidence" value="ECO:0000250"/>
    <property type="project" value="UniProtKB"/>
</dbReference>
<dbReference type="GO" id="GO:0043153">
    <property type="term" value="P:entrainment of circadian clock by photoperiod"/>
    <property type="evidence" value="ECO:0000250"/>
    <property type="project" value="UniProtKB"/>
</dbReference>
<dbReference type="GO" id="GO:0005977">
    <property type="term" value="P:glycogen metabolic process"/>
    <property type="evidence" value="ECO:0007669"/>
    <property type="project" value="UniProtKB-KW"/>
</dbReference>
<dbReference type="GO" id="GO:0034244">
    <property type="term" value="P:negative regulation of transcription elongation by RNA polymerase II"/>
    <property type="evidence" value="ECO:0000250"/>
    <property type="project" value="UniProtKB"/>
</dbReference>
<dbReference type="GO" id="GO:0090263">
    <property type="term" value="P:positive regulation of canonical Wnt signaling pathway"/>
    <property type="evidence" value="ECO:0000303"/>
    <property type="project" value="ParkinsonsUK-UCL"/>
</dbReference>
<dbReference type="GO" id="GO:0032968">
    <property type="term" value="P:positive regulation of transcription elongation by RNA polymerase II"/>
    <property type="evidence" value="ECO:0000250"/>
    <property type="project" value="UniProtKB"/>
</dbReference>
<dbReference type="GO" id="GO:0006470">
    <property type="term" value="P:protein dephosphorylation"/>
    <property type="evidence" value="ECO:0000250"/>
    <property type="project" value="UniProtKB"/>
</dbReference>
<dbReference type="GO" id="GO:0042752">
    <property type="term" value="P:regulation of circadian rhythm"/>
    <property type="evidence" value="ECO:0000250"/>
    <property type="project" value="UniProtKB"/>
</dbReference>
<dbReference type="GO" id="GO:0006446">
    <property type="term" value="P:regulation of translational initiation"/>
    <property type="evidence" value="ECO:0000314"/>
    <property type="project" value="ParkinsonsUK-UCL"/>
</dbReference>
<dbReference type="GO" id="GO:0043558">
    <property type="term" value="P:regulation of translational initiation in response to stress"/>
    <property type="evidence" value="ECO:0000314"/>
    <property type="project" value="ParkinsonsUK-UCL"/>
</dbReference>
<dbReference type="GO" id="GO:0001111">
    <property type="term" value="P:RNA polymerase II promoter clearance"/>
    <property type="evidence" value="ECO:0000250"/>
    <property type="project" value="UniProtKB"/>
</dbReference>
<dbReference type="CDD" id="cd07414">
    <property type="entry name" value="MPP_PP1_PPKL"/>
    <property type="match status" value="1"/>
</dbReference>
<dbReference type="FunFam" id="3.60.21.10:FF:000004">
    <property type="entry name" value="Serine/threonine-protein phosphatase"/>
    <property type="match status" value="1"/>
</dbReference>
<dbReference type="Gene3D" id="3.60.21.10">
    <property type="match status" value="1"/>
</dbReference>
<dbReference type="InterPro" id="IPR004843">
    <property type="entry name" value="Calcineurin-like_PHP_ApaH"/>
</dbReference>
<dbReference type="InterPro" id="IPR029052">
    <property type="entry name" value="Metallo-depent_PP-like"/>
</dbReference>
<dbReference type="InterPro" id="IPR050341">
    <property type="entry name" value="PP1_catalytic_subunit"/>
</dbReference>
<dbReference type="InterPro" id="IPR006186">
    <property type="entry name" value="Ser/Thr-sp_prot-phosphatase"/>
</dbReference>
<dbReference type="InterPro" id="IPR031675">
    <property type="entry name" value="STPPase_N"/>
</dbReference>
<dbReference type="PANTHER" id="PTHR11668">
    <property type="entry name" value="SERINE/THREONINE PROTEIN PHOSPHATASE"/>
    <property type="match status" value="1"/>
</dbReference>
<dbReference type="PANTHER" id="PTHR11668:SF377">
    <property type="entry name" value="SERINE_THREONINE-PROTEIN PHOSPHATASE PP1-ALPHA CATALYTIC SUBUNIT"/>
    <property type="match status" value="1"/>
</dbReference>
<dbReference type="Pfam" id="PF00149">
    <property type="entry name" value="Metallophos"/>
    <property type="match status" value="1"/>
</dbReference>
<dbReference type="Pfam" id="PF16891">
    <property type="entry name" value="STPPase_N"/>
    <property type="match status" value="1"/>
</dbReference>
<dbReference type="PRINTS" id="PR00114">
    <property type="entry name" value="STPHPHTASE"/>
</dbReference>
<dbReference type="SMART" id="SM00156">
    <property type="entry name" value="PP2Ac"/>
    <property type="match status" value="1"/>
</dbReference>
<dbReference type="SUPFAM" id="SSF56300">
    <property type="entry name" value="Metallo-dependent phosphatases"/>
    <property type="match status" value="1"/>
</dbReference>
<dbReference type="PROSITE" id="PS00125">
    <property type="entry name" value="SER_THR_PHOSPHATASE"/>
    <property type="match status" value="1"/>
</dbReference>
<name>PP1A_RABIT</name>
<gene>
    <name type="primary">PPP1CA</name>
    <name type="synonym">PPP1A</name>
</gene>
<proteinExistence type="evidence at protein level"/>
<sequence length="330" mass="37512">MSDSEKLNLDSIIGRLLEVQGSRPGKNVQLTENEIRGLCLKSREIFLSQPILLELEAPLKICGDIHGQYYDLLRLFEYGGFPPESNYLFLGDYVDRGKQSLETICLLLAYKIKYPENFFLLRGNHECASINRIYGFYDECKRRYNIKLWKTFTDCFNCLPIAAIVDEKIFCCHGGLSPDLQSMEQIRRIMRPTDVPDQGLLCDLLWSDPDKDVQGWGENDRGVSFTFGAEVVAKFLHKHDLDLICRAHQVVEDGYEFFAKRQLVTLFSAPNYCGEFDNAGAMMSVDETLMCSFQILKPADKNKGKYGQFSGLNPGGRPITPPRNSAKAKK</sequence>
<reference key="1">
    <citation type="journal article" date="1987" name="FEBS Lett.">
        <title>Isolation and sequence analysis of a cDNA clone encoding a type-1 protein phosphatase catalytic subunit: homology with protein phosphatase 2A.</title>
        <authorList>
            <person name="Berndt N."/>
            <person name="Campbell D.G."/>
            <person name="Caudwell F.B."/>
            <person name="Cohen P."/>
            <person name="da Cruz e Silva E.F."/>
            <person name="da Cruz e Silva O.B."/>
            <person name="Cohen P.T.W."/>
        </authorList>
    </citation>
    <scope>NUCLEOTIDE SEQUENCE [MRNA] (ISOFORM 1)</scope>
    <scope>PARTIAL PROTEIN SEQUENCE</scope>
    <scope>TISSUE SPECIFICITY</scope>
    <source>
        <strain>New Zealand white</strain>
        <tissue>Skeletal muscle</tissue>
    </source>
</reference>
<reference key="2">
    <citation type="journal article" date="1988" name="FASEB J.">
        <title>Molecular cloning of a cDNA for the catalytic subunit of rabbit muscle phosphorylase phosphatase.</title>
        <authorList>
            <person name="Bai G."/>
            <person name="Zhang Z."/>
            <person name="Amin J."/>
            <person name="Deans-Zirattu S.A."/>
            <person name="Lee E.Y.C."/>
        </authorList>
    </citation>
    <scope>NUCLEOTIDE SEQUENCE [MRNA] (ISOFORM 2)</scope>
    <source>
        <tissue>Muscle</tissue>
    </source>
</reference>
<reference key="3">
    <citation type="journal article" date="1988" name="FEBS Lett.">
        <title>Two isoforms of protein phosphatase 1 may be produced from the same gene.</title>
        <authorList>
            <person name="Cohen P.T.W."/>
        </authorList>
    </citation>
    <scope>NUCLEOTIDE SEQUENCE [MRNA] (ISOFORM 2)</scope>
    <source>
        <strain>New Zealand white</strain>
        <tissue>Skeletal muscle</tissue>
    </source>
</reference>
<reference key="4">
    <citation type="journal article" date="1989" name="Biochim. Biophys. Acta">
        <title>The major type-1 protein phosphatase catalytic subunits are the same gene products in rabbit skeletal muscle and rabbit liver.</title>
        <authorList>
            <person name="Cohen P.T.W."/>
            <person name="Schelling D.L."/>
            <person name="da Cruz e Silva O.B."/>
            <person name="Barker H.M."/>
            <person name="Cohen P."/>
        </authorList>
    </citation>
    <scope>NUCLEOTIDE SEQUENCE [MRNA] (ISOFORM 2)</scope>
    <source>
        <strain>New Zealand white</strain>
        <tissue>Liver</tissue>
    </source>
</reference>
<reference key="5">
    <citation type="journal article" date="2010" name="Biochem. Biophys. Res. Commun.">
        <title>FLJ23654 encodes a heart protein phosphatase 1-binding protein (Hepp1).</title>
        <authorList>
            <person name="Chen C.Y."/>
            <person name="Lai N.S."/>
            <person name="Yang J.J."/>
            <person name="Huang H.L."/>
            <person name="Hung W.C."/>
            <person name="Li C."/>
            <person name="Lin T.H."/>
            <person name="Huang H.B."/>
        </authorList>
    </citation>
    <scope>INTERACTION WITH PPP1R39</scope>
</reference>
<reference key="6">
    <citation type="journal article" date="1995" name="Nature">
        <title>Three-dimensional structure of the catalytic subunit of protein serine/threonine phosphatase-1.</title>
        <authorList>
            <person name="Goldberg J."/>
            <person name="Huang H.B."/>
            <person name="Kwon Y.G."/>
            <person name="Greengard P."/>
            <person name="Nairn A.C."/>
            <person name="Kuriyan J."/>
        </authorList>
    </citation>
    <scope>X-RAY CRYSTALLOGRAPHY (2.1 ANGSTROMS) IN COMPLEX WITH MANGANESE IONS</scope>
    <scope>COFACTOR</scope>
</reference>
<evidence type="ECO:0000250" key="1">
    <source>
        <dbReference type="UniProtKB" id="P36873"/>
    </source>
</evidence>
<evidence type="ECO:0000250" key="2">
    <source>
        <dbReference type="UniProtKB" id="P62136"/>
    </source>
</evidence>
<evidence type="ECO:0000250" key="3">
    <source>
        <dbReference type="UniProtKB" id="P62137"/>
    </source>
</evidence>
<evidence type="ECO:0000256" key="4">
    <source>
        <dbReference type="SAM" id="MobiDB-lite"/>
    </source>
</evidence>
<evidence type="ECO:0000269" key="5">
    <source>
    </source>
</evidence>
<evidence type="ECO:0000269" key="6">
    <source>
    </source>
</evidence>
<evidence type="ECO:0000269" key="7">
    <source>
    </source>
</evidence>
<evidence type="ECO:0000303" key="8">
    <source>
    </source>
</evidence>
<evidence type="ECO:0000305" key="9"/>
<evidence type="ECO:0007829" key="10">
    <source>
        <dbReference type="PDB" id="1FJM"/>
    </source>
</evidence>
<organism>
    <name type="scientific">Oryctolagus cuniculus</name>
    <name type="common">Rabbit</name>
    <dbReference type="NCBI Taxonomy" id="9986"/>
    <lineage>
        <taxon>Eukaryota</taxon>
        <taxon>Metazoa</taxon>
        <taxon>Chordata</taxon>
        <taxon>Craniata</taxon>
        <taxon>Vertebrata</taxon>
        <taxon>Euteleostomi</taxon>
        <taxon>Mammalia</taxon>
        <taxon>Eutheria</taxon>
        <taxon>Euarchontoglires</taxon>
        <taxon>Glires</taxon>
        <taxon>Lagomorpha</taxon>
        <taxon>Leporidae</taxon>
        <taxon>Oryctolagus</taxon>
    </lineage>
</organism>
<accession>P62139</accession>
<accession>P08128</accession>
<accession>P08129</accession>
<accession>P20653</accession>
<accession>P22802</accession>
<keyword id="KW-0002">3D-structure</keyword>
<keyword id="KW-0007">Acetylation</keyword>
<keyword id="KW-0025">Alternative splicing</keyword>
<keyword id="KW-0090">Biological rhythms</keyword>
<keyword id="KW-0119">Carbohydrate metabolism</keyword>
<keyword id="KW-0131">Cell cycle</keyword>
<keyword id="KW-0132">Cell division</keyword>
<keyword id="KW-0963">Cytoplasm</keyword>
<keyword id="KW-0903">Direct protein sequencing</keyword>
<keyword id="KW-0321">Glycogen metabolism</keyword>
<keyword id="KW-0378">Hydrolase</keyword>
<keyword id="KW-0464">Manganese</keyword>
<keyword id="KW-0479">Metal-binding</keyword>
<keyword id="KW-0539">Nucleus</keyword>
<keyword id="KW-0597">Phosphoprotein</keyword>
<keyword id="KW-0904">Protein phosphatase</keyword>
<keyword id="KW-1185">Reference proteome</keyword>
<protein>
    <recommendedName>
        <fullName>Serine/threonine-protein phosphatase PP1-alpha catalytic subunit</fullName>
        <shortName>PP-1A</shortName>
        <ecNumber evidence="2">3.1.3.16</ecNumber>
    </recommendedName>
</protein>
<comment type="function">
    <text evidence="2 3">Protein phosphatase that associates with over 200 regulatory proteins to form highly specific holoenzymes which dephosphorylate hundreds of biological targets. Protein phosphatase 1 (PP1) is essential for cell division, transcription elongation, and participates in the regulation of glycogen metabolism, muscle contractility and protein synthesis. Involved in regulation of ionic conductances and long-term synaptic plasticity. May play an important role in dephosphorylating substrates such as the postsynaptic density-associated Ca(2+)/calmodulin dependent protein kinase II. Catalytic component of the PNUTS-PP1 protein phosphatase complex, a protein phosphatase 1 (PP1) complex that promotes RNA polymerase II transcription pause-release, allowing transcription elongation: the PNUTS-PP1 complex mediates the release of RNA polymerase II from promoter-proximal region of genes by catalyzing dephosphorylation of proteins involved in transcription, such as AFF4, CDK9, MEPCE, INTS12, NCBP1, POLR2M/GDOWN1 and SUPT6H. The PNUTS-PP1 complex also regulates transcription termination by mediating dephosphorylation of SUPT5H in termination zones downstream of poly(A) sites, thereby promoting deceleration of RNA polymerase II transcription. PNUTS-PP1 complex is also involved in the response to replication stress by mediating dephosphorylation of POLR2A at 'Ser-5' of the CTD, promoting RNA polymerase II degradation. PNUTS-PP1 also plays a role in the control of chromatin structure and cell cycle progression during the transition from mitosis into interphase. Regulates NEK2 function in terms of kinase activity and centrosome number and splitting, both in the presence and absence of radiation-induced DNA damage (By similarity). Regulator of neural tube and optic fissure closure, and enteric neural crest cell (ENCCs) migration during development (By similarity). In balance with CSNK1D and CSNK1E, determines the circadian period length, through the regulation of the speed and rhythmicity of PER1 and PER2 phosphorylation. May dephosphorylate CSNK1D and CSNK1E. Dephosphorylates the 'Ser-418' residue of FOXP3 in regulatory T-cells (Treg) from patients with rheumatoid arthritis, thereby inactivating FOXP3 and rendering Treg cells functionally defective. Dephosphorylates CENPA. Dephosphorylates the 'Ser-139' residue of ATG16L1 causing dissociation of ATG12-ATG5-ATG16L1 complex, thereby inhibiting autophagy. Together with PPP1CC (PP1-gamma subunit), dephosphorylates IFIH1/MDA5 and RIG-I leading to their activation and a functional innate immune response. Core component of the SHOC2-MRAS-PP1c (SMP) holophosphatase complex that regulates the MAPK pathway activation. The SMP complex specifically dephosphorylates the inhibitory phosphorylation at 'Ser-259' of RAF1 kinase, 'Ser-365' of BRAF kinase and 'Ser-214' of ARAF kinase, stimulating their kinase activities. The SMP complex enhances the dephosphorylation activity and substrate specificity of PP1c (By similarity).</text>
</comment>
<comment type="catalytic activity">
    <reaction evidence="2">
        <text>O-phospho-L-seryl-[protein] + H2O = L-seryl-[protein] + phosphate</text>
        <dbReference type="Rhea" id="RHEA:20629"/>
        <dbReference type="Rhea" id="RHEA-COMP:9863"/>
        <dbReference type="Rhea" id="RHEA-COMP:11604"/>
        <dbReference type="ChEBI" id="CHEBI:15377"/>
        <dbReference type="ChEBI" id="CHEBI:29999"/>
        <dbReference type="ChEBI" id="CHEBI:43474"/>
        <dbReference type="ChEBI" id="CHEBI:83421"/>
        <dbReference type="EC" id="3.1.3.16"/>
    </reaction>
</comment>
<comment type="catalytic activity">
    <reaction evidence="2">
        <text>O-phospho-L-threonyl-[protein] + H2O = L-threonyl-[protein] + phosphate</text>
        <dbReference type="Rhea" id="RHEA:47004"/>
        <dbReference type="Rhea" id="RHEA-COMP:11060"/>
        <dbReference type="Rhea" id="RHEA-COMP:11605"/>
        <dbReference type="ChEBI" id="CHEBI:15377"/>
        <dbReference type="ChEBI" id="CHEBI:30013"/>
        <dbReference type="ChEBI" id="CHEBI:43474"/>
        <dbReference type="ChEBI" id="CHEBI:61977"/>
        <dbReference type="EC" id="3.1.3.16"/>
    </reaction>
</comment>
<comment type="cofactor">
    <cofactor evidence="7">
        <name>Mn(2+)</name>
        <dbReference type="ChEBI" id="CHEBI:29035"/>
    </cofactor>
    <text evidence="7">Binds 2 manganese ions per subunit.</text>
</comment>
<comment type="subunit">
    <text evidence="2 3 5">PP1 comprises a catalytic subunit, PPP1CA, PPP1CB or PPP1CC, which is folded into its native form by inhibitor 2 and glycogen synthetase kinase 3, and then complexed to one or several targeting or regulatory subunits. PPP1R12A, PPP1R12B and PPP1R12C mediate binding to myosin. PPP1R3A (in skeletal muscle), PPP1R3B (in liver), PPP1R3C, PPP1R3D and PPP1R3F (in brain) mediate binding to glycogen. Interacts with PPP1R15A and PPP1R15B; the interactions mediate binding to EIF2S1. Part of a complex containing PPP1R15B, PP1 and NCK1/2. Interacts with PPP1R9A, PPP1R9B and PPP1R7. Interacts with YLPM1. Forms a complex with ILF2, ILF3, YLPM1, KHDRBS1, RBMX and NCOA5. Interacts with NOM1 and PPP1R8. Interacts with PPP1R16B. Interacts with RPSA only in the presence of PPP1R16B. Component of the PNUTS-PP1 phosphatase complex, composed of PPP1R10/PNUTS, TOX4, WDR82, and PPP1CA or PPP1CB or PPP1CC. Interacts with PPP1R10/PNUTS and PPP1R8. Interacts with WDR82 in the presence of PPP1R10/PNUTS. Interacts with TRIM28; the interaction dephosphorylates TRIM28 on 'Ser-824' and forms a complex at the p21 promoter site (By similarity). Interacts with PPP1R39. Interacts with NEK2. Interacts with PHACTR4; which acts as an activator of PP1 activity. Interacts with FER; this promotes phosphorylation at Thr-320 (By similarity). Interacts with BTBD10 (By similarity). Interacts with KCTD20 (By similarity). Interacts with FOXP3 (By similarity). Interacts with CENPA (By similarity). Interacts with ATG16L1 (By similarity). Found in a complex with PPP1CA, PPP1CC, SHC1 and PEAK1 (By similarity). Interacts with tensin TNS1 (By similarity). Interacts with SAXO4, PPP1R21, PPP1R26, PPP1R27, PPP1R35, PPP1R36, PPP1R37, SH3RF2, ELFN1 and ELFN2 (By similarity). Interacts with TPRN; the interaction results in inhibition of PPC1A phosphatase activity (By similarity). Interacts with SKA1 (via C-terminus); the interaction is direct and required for the recruitment of PP1 to the kinetochore (By similarity). Interacts with the KNL1 complex subunit KNL1; the interaction is direct and mutually exclusive with KNL1 binding to microtubules (By similarity). Component of the SHOC2-MRAS-PP1c (SMP) complex consisting of SHOC2, GTP-bound M-Ras/MRAS and the catalytic subunit of protein phosphatase 1 (either PPP1CA, PPP1CB or PPP1CC) (By similarity). SHOC2 and PP1c preferably bind M-Ras/MRAS, but they also bind K-Ras/KRAS, N-Ras/NRAS and H-Ras/HRAS; these interactions are GTP-dependent and both SHOC2 and PP1c are required to form a stable complex (By similarity). Interacts with SHOC2 in the absence of Ras GTPases (By similarity).</text>
</comment>
<comment type="interaction">
    <interactant intactId="EBI-2008988">
        <id>P62139</id>
    </interactant>
    <interactant intactId="EBI-2256942">
        <id>Q13224</id>
        <label>GRIN2B</label>
    </interactant>
    <organismsDiffer>true</organismsDiffer>
    <experiments>2</experiments>
</comment>
<comment type="interaction">
    <interactant intactId="EBI-2008988">
        <id>P62139</id>
    </interactant>
    <interactant intactId="EBI-1048104">
        <id>O60927</id>
        <label>PPP1R11</label>
    </interactant>
    <organismsDiffer>true</organismsDiffer>
    <experiments>2</experiments>
</comment>
<comment type="subcellular location">
    <subcellularLocation>
        <location evidence="2">Cytoplasm</location>
    </subcellularLocation>
    <subcellularLocation>
        <location evidence="2">Nucleus</location>
    </subcellularLocation>
    <subcellularLocation>
        <location evidence="2">Nucleus</location>
        <location evidence="2">Nucleoplasm</location>
    </subcellularLocation>
    <subcellularLocation>
        <location evidence="2">Nucleus</location>
        <location evidence="2">Nucleolus</location>
    </subcellularLocation>
    <text evidence="2">Primarily nuclear and largely excluded from the nucleolus. Highly mobile in cells and can be relocalized through interaction with targeting subunits. NOM1 plays a role in targeting this protein to the nucleolus. In the presence of PPP1R8 relocalizes from the nucleus to nuclear speckles.</text>
</comment>
<comment type="alternative products">
    <event type="alternative splicing"/>
    <isoform>
        <id>P62139-1</id>
        <id>P08129-1</id>
        <name>2</name>
        <name>1-alpha-2</name>
        <sequence type="displayed"/>
    </isoform>
    <isoform>
        <id>P62139-2</id>
        <id>P08128-1</id>
        <name>1</name>
        <name>1-alpha-1</name>
        <sequence type="described" ref="VSP_010642"/>
    </isoform>
</comment>
<comment type="tissue specificity">
    <text evidence="6">Detected in skeletal muscle (at protein level). Detected in skeletal muscle.</text>
</comment>
<comment type="PTM">
    <text evidence="2">Phosphorylated. Dephosphorylated at Thr-320 in the presence of ionizing radiation.</text>
</comment>
<comment type="similarity">
    <text evidence="9">Belongs to the PPP phosphatase family. PP-1 subfamily.</text>
</comment>
<comment type="online information" name="Protein Spotlight">
    <link uri="https://www.proteinspotlight.org/back_issues/032"/>
    <text>The things we forget - Issue 32 of March 2003</text>
</comment>
<feature type="initiator methionine" description="Removed" evidence="2">
    <location>
        <position position="1"/>
    </location>
</feature>
<feature type="chain" id="PRO_0000058776" description="Serine/threonine-protein phosphatase PP1-alpha catalytic subunit">
    <location>
        <begin position="2"/>
        <end position="330"/>
    </location>
</feature>
<feature type="region of interest" description="Disordered" evidence="4">
    <location>
        <begin position="306"/>
        <end position="330"/>
    </location>
</feature>
<feature type="active site" description="Proton donor" evidence="1">
    <location>
        <position position="125"/>
    </location>
</feature>
<feature type="binding site" evidence="2">
    <location>
        <position position="64"/>
    </location>
    <ligand>
        <name>Mn(2+)</name>
        <dbReference type="ChEBI" id="CHEBI:29035"/>
        <label>1</label>
    </ligand>
</feature>
<feature type="binding site" evidence="2">
    <location>
        <position position="64"/>
    </location>
    <ligand>
        <name>Mn(2+)</name>
        <dbReference type="ChEBI" id="CHEBI:29035"/>
        <label>2</label>
    </ligand>
</feature>
<feature type="binding site" evidence="2">
    <location>
        <position position="66"/>
    </location>
    <ligand>
        <name>Mn(2+)</name>
        <dbReference type="ChEBI" id="CHEBI:29035"/>
        <label>1</label>
    </ligand>
</feature>
<feature type="binding site" evidence="2">
    <location>
        <position position="92"/>
    </location>
    <ligand>
        <name>Mn(2+)</name>
        <dbReference type="ChEBI" id="CHEBI:29035"/>
        <label>1</label>
    </ligand>
</feature>
<feature type="binding site" evidence="2">
    <location>
        <position position="92"/>
    </location>
    <ligand>
        <name>Mn(2+)</name>
        <dbReference type="ChEBI" id="CHEBI:29035"/>
        <label>2</label>
    </ligand>
</feature>
<feature type="binding site" evidence="2">
    <location>
        <position position="124"/>
    </location>
    <ligand>
        <name>Mn(2+)</name>
        <dbReference type="ChEBI" id="CHEBI:29035"/>
        <label>2</label>
    </ligand>
</feature>
<feature type="binding site" evidence="2">
    <location>
        <position position="173"/>
    </location>
    <ligand>
        <name>Mn(2+)</name>
        <dbReference type="ChEBI" id="CHEBI:29035"/>
        <label>2</label>
    </ligand>
</feature>
<feature type="binding site" evidence="2">
    <location>
        <position position="248"/>
    </location>
    <ligand>
        <name>Mn(2+)</name>
        <dbReference type="ChEBI" id="CHEBI:29035"/>
        <label>2</label>
    </ligand>
</feature>
<feature type="modified residue" description="N-acetylserine" evidence="2">
    <location>
        <position position="2"/>
    </location>
</feature>
<feature type="modified residue" description="Phosphoserine" evidence="2">
    <location>
        <position position="2"/>
    </location>
</feature>
<feature type="modified residue" description="Phosphoserine" evidence="2">
    <location>
        <position position="22"/>
    </location>
</feature>
<feature type="modified residue" description="N6-acetyllysine" evidence="3">
    <location>
        <position position="305"/>
    </location>
</feature>
<feature type="modified residue" description="Phosphotyrosine" evidence="3">
    <location>
        <position position="306"/>
    </location>
</feature>
<feature type="modified residue" description="Phosphothreonine" evidence="2">
    <location>
        <position position="320"/>
    </location>
</feature>
<feature type="modified residue" description="Phosphoserine" evidence="2">
    <location>
        <position position="325"/>
    </location>
</feature>
<feature type="splice variant" id="VSP_010642" description="In isoform 1." evidence="8">
    <original>MSDSEKLNLDSIIGRLLEVQGSRPGKNVQLTEN</original>
    <variation>MVTIMTTSEYLSGY</variation>
    <location>
        <begin position="1"/>
        <end position="33"/>
    </location>
</feature>
<feature type="sequence conflict" description="In Ref. 1; CAA68693 and 3; CAA30645." evidence="9" ref="1 3">
    <original>F</original>
    <variation>L</variation>
    <location>
        <position position="309"/>
    </location>
</feature>
<feature type="helix" evidence="10">
    <location>
        <begin position="9"/>
        <end position="18"/>
    </location>
</feature>
<feature type="turn" evidence="10">
    <location>
        <begin position="19"/>
        <end position="22"/>
    </location>
</feature>
<feature type="helix" evidence="10">
    <location>
        <begin position="32"/>
        <end position="48"/>
    </location>
</feature>
<feature type="strand" evidence="10">
    <location>
        <begin position="51"/>
        <end position="55"/>
    </location>
</feature>
<feature type="strand" evidence="10">
    <location>
        <begin position="57"/>
        <end position="62"/>
    </location>
</feature>
<feature type="helix" evidence="10">
    <location>
        <begin position="69"/>
        <end position="79"/>
    </location>
</feature>
<feature type="strand" evidence="10">
    <location>
        <begin position="87"/>
        <end position="89"/>
    </location>
</feature>
<feature type="strand" evidence="10">
    <location>
        <begin position="94"/>
        <end position="98"/>
    </location>
</feature>
<feature type="helix" evidence="10">
    <location>
        <begin position="100"/>
        <end position="113"/>
    </location>
</feature>
<feature type="turn" evidence="10">
    <location>
        <begin position="115"/>
        <end position="117"/>
    </location>
</feature>
<feature type="strand" evidence="10">
    <location>
        <begin position="118"/>
        <end position="120"/>
    </location>
</feature>
<feature type="helix" evidence="10">
    <location>
        <begin position="128"/>
        <end position="134"/>
    </location>
</feature>
<feature type="helix" evidence="10">
    <location>
        <begin position="136"/>
        <end position="143"/>
    </location>
</feature>
<feature type="helix" evidence="10">
    <location>
        <begin position="146"/>
        <end position="156"/>
    </location>
</feature>
<feature type="strand" evidence="10">
    <location>
        <begin position="162"/>
        <end position="165"/>
    </location>
</feature>
<feature type="turn" evidence="10">
    <location>
        <begin position="166"/>
        <end position="168"/>
    </location>
</feature>
<feature type="strand" evidence="10">
    <location>
        <begin position="169"/>
        <end position="174"/>
    </location>
</feature>
<feature type="helix" evidence="10">
    <location>
        <begin position="183"/>
        <end position="188"/>
    </location>
</feature>
<feature type="strand" evidence="10">
    <location>
        <begin position="197"/>
        <end position="199"/>
    </location>
</feature>
<feature type="helix" evidence="10">
    <location>
        <begin position="200"/>
        <end position="206"/>
    </location>
</feature>
<feature type="strand" evidence="10">
    <location>
        <begin position="214"/>
        <end position="218"/>
    </location>
</feature>
<feature type="strand" evidence="10">
    <location>
        <begin position="222"/>
        <end position="227"/>
    </location>
</feature>
<feature type="helix" evidence="10">
    <location>
        <begin position="229"/>
        <end position="239"/>
    </location>
</feature>
<feature type="strand" evidence="10">
    <location>
        <begin position="242"/>
        <end position="246"/>
    </location>
</feature>
<feature type="strand" evidence="10">
    <location>
        <begin position="254"/>
        <end position="258"/>
    </location>
</feature>
<feature type="turn" evidence="10">
    <location>
        <begin position="259"/>
        <end position="262"/>
    </location>
</feature>
<feature type="strand" evidence="10">
    <location>
        <begin position="263"/>
        <end position="267"/>
    </location>
</feature>
<feature type="strand" evidence="10">
    <location>
        <begin position="274"/>
        <end position="276"/>
    </location>
</feature>
<feature type="strand" evidence="10">
    <location>
        <begin position="280"/>
        <end position="285"/>
    </location>
</feature>
<feature type="strand" evidence="10">
    <location>
        <begin position="291"/>
        <end position="296"/>
    </location>
</feature>